<reference key="1">
    <citation type="journal article" date="2004" name="Proc. Natl. Acad. Sci. U.S.A.">
        <title>H5N1 influenza: a protean pandemic threat.</title>
        <authorList>
            <person name="Guan Y."/>
            <person name="Poon L.L.M."/>
            <person name="Cheung C.Y."/>
            <person name="Ellis T.M."/>
            <person name="Lim W."/>
            <person name="Lipatov A.S."/>
            <person name="Chan K.H."/>
            <person name="Sturm-Ramirez K.M."/>
            <person name="Cheung C.L."/>
            <person name="Leung Y.H.C."/>
            <person name="Yuen K.Y."/>
            <person name="Webster R.G."/>
            <person name="Peiris J.S.M."/>
        </authorList>
    </citation>
    <scope>NUCLEOTIDE SEQUENCE [GENOMIC RNA]</scope>
</reference>
<dbReference type="EMBL" id="AY575893">
    <property type="protein sequence ID" value="AAT39089.1"/>
    <property type="molecule type" value="Genomic_DNA"/>
</dbReference>
<dbReference type="SMR" id="Q6J8D2"/>
<dbReference type="GO" id="GO:0042025">
    <property type="term" value="C:host cell nucleus"/>
    <property type="evidence" value="ECO:0007669"/>
    <property type="project" value="UniProtKB-SubCell"/>
</dbReference>
<dbReference type="GO" id="GO:0016020">
    <property type="term" value="C:membrane"/>
    <property type="evidence" value="ECO:0007669"/>
    <property type="project" value="UniProtKB-KW"/>
</dbReference>
<dbReference type="GO" id="GO:0055036">
    <property type="term" value="C:virion membrane"/>
    <property type="evidence" value="ECO:0007669"/>
    <property type="project" value="UniProtKB-SubCell"/>
</dbReference>
<dbReference type="GO" id="GO:0003723">
    <property type="term" value="F:RNA binding"/>
    <property type="evidence" value="ECO:0007669"/>
    <property type="project" value="UniProtKB-UniRule"/>
</dbReference>
<dbReference type="GO" id="GO:0039660">
    <property type="term" value="F:structural constituent of virion"/>
    <property type="evidence" value="ECO:0007669"/>
    <property type="project" value="UniProtKB-UniRule"/>
</dbReference>
<dbReference type="GO" id="GO:0046761">
    <property type="term" value="P:viral budding from plasma membrane"/>
    <property type="evidence" value="ECO:0007669"/>
    <property type="project" value="UniProtKB-UniRule"/>
</dbReference>
<dbReference type="FunFam" id="1.10.10.180:FF:000001">
    <property type="entry name" value="Matrix protein 1"/>
    <property type="match status" value="1"/>
</dbReference>
<dbReference type="FunFam" id="1.20.91.10:FF:000001">
    <property type="entry name" value="Matrix protein 1"/>
    <property type="match status" value="1"/>
</dbReference>
<dbReference type="Gene3D" id="1.10.10.180">
    <property type="match status" value="1"/>
</dbReference>
<dbReference type="Gene3D" id="1.20.91.10">
    <property type="match status" value="1"/>
</dbReference>
<dbReference type="HAMAP" id="MF_04068">
    <property type="entry name" value="INFV_M1"/>
    <property type="match status" value="1"/>
</dbReference>
<dbReference type="InterPro" id="IPR036039">
    <property type="entry name" value="Flu_matrix_M1"/>
</dbReference>
<dbReference type="InterPro" id="IPR013188">
    <property type="entry name" value="Flu_matrix_M1_C"/>
</dbReference>
<dbReference type="InterPro" id="IPR001561">
    <property type="entry name" value="Flu_matrix_M1_N"/>
</dbReference>
<dbReference type="InterPro" id="IPR015423">
    <property type="entry name" value="Flu_matrix_M1_N_sub1"/>
</dbReference>
<dbReference type="InterPro" id="IPR015799">
    <property type="entry name" value="Flu_matrix_M1_N_sub2"/>
</dbReference>
<dbReference type="InterPro" id="IPR037533">
    <property type="entry name" value="INFV_M1"/>
</dbReference>
<dbReference type="Pfam" id="PF00598">
    <property type="entry name" value="Flu_M1"/>
    <property type="match status" value="1"/>
</dbReference>
<dbReference type="Pfam" id="PF08289">
    <property type="entry name" value="Flu_M1_C"/>
    <property type="match status" value="1"/>
</dbReference>
<dbReference type="SMART" id="SM00759">
    <property type="entry name" value="Flu_M1_C"/>
    <property type="match status" value="1"/>
</dbReference>
<dbReference type="SUPFAM" id="SSF48145">
    <property type="entry name" value="Influenza virus matrix protein M1"/>
    <property type="match status" value="1"/>
</dbReference>
<sequence>MSLLTEVETYVLSIIPSGPLKAEIAQKLEDVFAGKNTDLEALMEWLKTRPILSPLTKGILGFVFTLTVPSERGLQRRRFVQNALNGNGDPNNMDRAVKLYKKLKREITFHGAKEVALSYSTGALASCMGLIYNRMGTVTTEVAFGLVCATCEQIADSQHRSHRQMATITNPLIRHENRMVLASTTAKAMEQMAGSSEQAAEAMEVANQARQMVQAMRTIGTHPNSSAGLRDNLLENLQAYQKRMGVQMQRFK</sequence>
<organismHost>
    <name type="scientific">Aves</name>
    <dbReference type="NCBI Taxonomy" id="8782"/>
</organismHost>
<organismHost>
    <name type="scientific">Felis catus</name>
    <name type="common">Cat</name>
    <name type="synonym">Felis silvestris catus</name>
    <dbReference type="NCBI Taxonomy" id="9685"/>
</organismHost>
<organismHost>
    <name type="scientific">Homo sapiens</name>
    <name type="common">Human</name>
    <dbReference type="NCBI Taxonomy" id="9606"/>
</organismHost>
<organismHost>
    <name type="scientific">Panthera pardus</name>
    <name type="common">Leopard</name>
    <name type="synonym">Felis pardus</name>
    <dbReference type="NCBI Taxonomy" id="9691"/>
</organismHost>
<organismHost>
    <name type="scientific">Panthera tigris</name>
    <name type="common">Tiger</name>
    <dbReference type="NCBI Taxonomy" id="9694"/>
</organismHost>
<organismHost>
    <name type="scientific">Sus scrofa</name>
    <name type="common">Pig</name>
    <dbReference type="NCBI Taxonomy" id="9823"/>
</organismHost>
<feature type="chain" id="PRO_0000311618" description="Matrix protein 1">
    <location>
        <begin position="1"/>
        <end position="252"/>
    </location>
</feature>
<feature type="region of interest" description="Membrane-binding" evidence="1">
    <location>
        <begin position="1"/>
        <end position="164"/>
    </location>
</feature>
<feature type="region of interest" description="RNP-binding" evidence="1">
    <location>
        <begin position="165"/>
        <end position="252"/>
    </location>
</feature>
<feature type="short sequence motif" description="Nuclear localization signal" evidence="1">
    <location>
        <begin position="101"/>
        <end position="105"/>
    </location>
</feature>
<gene>
    <name evidence="1" type="primary">M</name>
</gene>
<keyword id="KW-0025">Alternative splicing</keyword>
<keyword id="KW-1048">Host nucleus</keyword>
<keyword id="KW-0472">Membrane</keyword>
<keyword id="KW-0694">RNA-binding</keyword>
<keyword id="KW-0468">Viral matrix protein</keyword>
<keyword id="KW-0946">Virion</keyword>
<proteinExistence type="inferred from homology"/>
<accession>Q6J8D2</accession>
<organism>
    <name type="scientific">Influenza A virus (strain A/Hong Kong/212/2003 H5N1 genotype Z+)</name>
    <dbReference type="NCBI Taxonomy" id="279794"/>
    <lineage>
        <taxon>Viruses</taxon>
        <taxon>Riboviria</taxon>
        <taxon>Orthornavirae</taxon>
        <taxon>Negarnaviricota</taxon>
        <taxon>Polyploviricotina</taxon>
        <taxon>Insthoviricetes</taxon>
        <taxon>Articulavirales</taxon>
        <taxon>Orthomyxoviridae</taxon>
        <taxon>Alphainfluenzavirus</taxon>
        <taxon>Alphainfluenzavirus influenzae</taxon>
        <taxon>Influenza A virus</taxon>
    </lineage>
</organism>
<evidence type="ECO:0000255" key="1">
    <source>
        <dbReference type="HAMAP-Rule" id="MF_04068"/>
    </source>
</evidence>
<name>M1_I03A0</name>
<protein>
    <recommendedName>
        <fullName evidence="1">Matrix protein 1</fullName>
        <shortName evidence="1">M1</shortName>
    </recommendedName>
</protein>
<comment type="function">
    <text evidence="1">Plays critical roles in virus replication, from virus entry and uncoating to assembly and budding of the virus particle. M1 binding to ribonucleocapsids (RNPs) in nucleus seems to inhibit viral transcription. Interaction of viral NEP with M1-RNP is thought to promote nuclear export of the complex, which is targeted to the virion assembly site at the apical plasma membrane in polarized epithelial cells. Interactions with NA and HA may bring M1, a non-raft-associated protein, into lipid rafts. Forms a continuous shell on the inner side of the lipid bilayer in virion, where it binds the RNP. During virus entry into cell, the M2 ion channel acidifies the internal virion core, inducing M1 dissociation from the RNP. M1-free RNPs are transported to the nucleus, where viral transcription and replication can take place.</text>
</comment>
<comment type="function">
    <text evidence="1">Determines the virion's shape: spherical or filamentous. Clinical isolates of influenza are characterized by the presence of significant proportion of filamentous virions, whereas after multiple passage on eggs or cell culture, virions have only spherical morphology. Filamentous virions are thought to be important to infect neighboring cells, and spherical virions more suited to spread through aerosol between hosts organisms.</text>
</comment>
<comment type="subunit">
    <text evidence="1">Homodimer and homomultimer. Interacts with NEP. Binds ribonucleocapsid by both interacting with genomic RNA and NP protein. May interact with HA and NA. Cannot bind NP without genomic RNA.</text>
</comment>
<comment type="subcellular location">
    <subcellularLocation>
        <location evidence="1">Virion membrane</location>
        <topology evidence="1">Peripheral membrane protein</topology>
        <orientation evidence="1">Cytoplasmic side</orientation>
    </subcellularLocation>
    <subcellularLocation>
        <location evidence="1">Host nucleus</location>
    </subcellularLocation>
</comment>
<comment type="alternative products">
    <event type="alternative splicing"/>
    <isoform>
        <id>Q6J8D2-1</id>
        <name>M1</name>
        <sequence type="displayed"/>
    </isoform>
    <isoform>
        <id>P0C5T5-1</id>
        <name>M2</name>
        <sequence type="external"/>
    </isoform>
    <text>Only the first 9 residues are shared by the 2 isoforms.</text>
</comment>
<comment type="miscellaneous">
    <text evidence="1">Most abundant protein in virion. When expressed alone can form virus-like particles in transfected cells.</text>
</comment>
<comment type="similarity">
    <text evidence="1">Belongs to the influenza viruses Matrix protein M1 family.</text>
</comment>